<dbReference type="EC" id="3.6.1.27" evidence="1"/>
<dbReference type="EMBL" id="BX950851">
    <property type="protein sequence ID" value="CAG76487.1"/>
    <property type="molecule type" value="Genomic_DNA"/>
</dbReference>
<dbReference type="SMR" id="Q6D159"/>
<dbReference type="STRING" id="218491.ECA3589"/>
<dbReference type="KEGG" id="eca:ECA3589"/>
<dbReference type="PATRIC" id="fig|218491.5.peg.3640"/>
<dbReference type="eggNOG" id="COG1968">
    <property type="taxonomic scope" value="Bacteria"/>
</dbReference>
<dbReference type="HOGENOM" id="CLU_060296_2_0_6"/>
<dbReference type="OrthoDB" id="9808289at2"/>
<dbReference type="Proteomes" id="UP000007966">
    <property type="component" value="Chromosome"/>
</dbReference>
<dbReference type="GO" id="GO:0005886">
    <property type="term" value="C:plasma membrane"/>
    <property type="evidence" value="ECO:0007669"/>
    <property type="project" value="UniProtKB-SubCell"/>
</dbReference>
<dbReference type="GO" id="GO:0050380">
    <property type="term" value="F:undecaprenyl-diphosphatase activity"/>
    <property type="evidence" value="ECO:0007669"/>
    <property type="project" value="UniProtKB-UniRule"/>
</dbReference>
<dbReference type="GO" id="GO:0071555">
    <property type="term" value="P:cell wall organization"/>
    <property type="evidence" value="ECO:0007669"/>
    <property type="project" value="UniProtKB-KW"/>
</dbReference>
<dbReference type="GO" id="GO:0009252">
    <property type="term" value="P:peptidoglycan biosynthetic process"/>
    <property type="evidence" value="ECO:0007669"/>
    <property type="project" value="UniProtKB-KW"/>
</dbReference>
<dbReference type="GO" id="GO:0008360">
    <property type="term" value="P:regulation of cell shape"/>
    <property type="evidence" value="ECO:0007669"/>
    <property type="project" value="UniProtKB-KW"/>
</dbReference>
<dbReference type="GO" id="GO:0046677">
    <property type="term" value="P:response to antibiotic"/>
    <property type="evidence" value="ECO:0007669"/>
    <property type="project" value="UniProtKB-UniRule"/>
</dbReference>
<dbReference type="HAMAP" id="MF_01006">
    <property type="entry name" value="Undec_diphosphatase"/>
    <property type="match status" value="1"/>
</dbReference>
<dbReference type="InterPro" id="IPR003824">
    <property type="entry name" value="UppP"/>
</dbReference>
<dbReference type="NCBIfam" id="NF001388">
    <property type="entry name" value="PRK00281.1-1"/>
    <property type="match status" value="1"/>
</dbReference>
<dbReference type="NCBIfam" id="NF001389">
    <property type="entry name" value="PRK00281.1-2"/>
    <property type="match status" value="1"/>
</dbReference>
<dbReference type="NCBIfam" id="NF001390">
    <property type="entry name" value="PRK00281.1-4"/>
    <property type="match status" value="1"/>
</dbReference>
<dbReference type="NCBIfam" id="TIGR00753">
    <property type="entry name" value="undec_PP_bacA"/>
    <property type="match status" value="1"/>
</dbReference>
<dbReference type="PANTHER" id="PTHR30622">
    <property type="entry name" value="UNDECAPRENYL-DIPHOSPHATASE"/>
    <property type="match status" value="1"/>
</dbReference>
<dbReference type="PANTHER" id="PTHR30622:SF3">
    <property type="entry name" value="UNDECAPRENYL-DIPHOSPHATASE"/>
    <property type="match status" value="1"/>
</dbReference>
<dbReference type="Pfam" id="PF02673">
    <property type="entry name" value="BacA"/>
    <property type="match status" value="1"/>
</dbReference>
<gene>
    <name evidence="1" type="primary">uppP</name>
    <name type="ordered locus">ECA3589</name>
</gene>
<sequence>MTDLHSLLIAFILGVVEGLTEFLPVSSTGHMIIVGHWLGFVDEKAKTFEVIIQLGSILAVVVMFWRRLFGLIGIHFGKVPHEGKTSGRLKLTHILLAMIPAVVLGLIFHDVIKSLFYPQNVMYSLVIGGFLLLAAEWFKPKEPRAVGLDDITHRQAFMIGCFQCLALWPGFSRSGATISGGMLMGVSRYAASEFSFILAVPMMMGATVLDLYKSWHFLSLADVPMFAVGFVTAFVVALIAIKTFLKIIKRISFIPFAIYRFIVAGVVYMVFM</sequence>
<keyword id="KW-0046">Antibiotic resistance</keyword>
<keyword id="KW-0997">Cell inner membrane</keyword>
<keyword id="KW-1003">Cell membrane</keyword>
<keyword id="KW-0133">Cell shape</keyword>
<keyword id="KW-0961">Cell wall biogenesis/degradation</keyword>
<keyword id="KW-0378">Hydrolase</keyword>
<keyword id="KW-0472">Membrane</keyword>
<keyword id="KW-0573">Peptidoglycan synthesis</keyword>
<keyword id="KW-1185">Reference proteome</keyword>
<keyword id="KW-0812">Transmembrane</keyword>
<keyword id="KW-1133">Transmembrane helix</keyword>
<comment type="function">
    <text evidence="1">Catalyzes the dephosphorylation of undecaprenyl diphosphate (UPP). Confers resistance to bacitracin.</text>
</comment>
<comment type="catalytic activity">
    <reaction evidence="1">
        <text>di-trans,octa-cis-undecaprenyl diphosphate + H2O = di-trans,octa-cis-undecaprenyl phosphate + phosphate + H(+)</text>
        <dbReference type="Rhea" id="RHEA:28094"/>
        <dbReference type="ChEBI" id="CHEBI:15377"/>
        <dbReference type="ChEBI" id="CHEBI:15378"/>
        <dbReference type="ChEBI" id="CHEBI:43474"/>
        <dbReference type="ChEBI" id="CHEBI:58405"/>
        <dbReference type="ChEBI" id="CHEBI:60392"/>
        <dbReference type="EC" id="3.6.1.27"/>
    </reaction>
</comment>
<comment type="subcellular location">
    <subcellularLocation>
        <location evidence="1">Cell inner membrane</location>
        <topology evidence="1">Multi-pass membrane protein</topology>
    </subcellularLocation>
</comment>
<comment type="miscellaneous">
    <text>Bacitracin is thought to be involved in the inhibition of peptidoglycan synthesis by sequestering undecaprenyl diphosphate, thereby reducing the pool of lipid carrier available.</text>
</comment>
<comment type="similarity">
    <text evidence="1">Belongs to the UppP family.</text>
</comment>
<reference key="1">
    <citation type="journal article" date="2004" name="Proc. Natl. Acad. Sci. U.S.A.">
        <title>Genome sequence of the enterobacterial phytopathogen Erwinia carotovora subsp. atroseptica and characterization of virulence factors.</title>
        <authorList>
            <person name="Bell K.S."/>
            <person name="Sebaihia M."/>
            <person name="Pritchard L."/>
            <person name="Holden M.T.G."/>
            <person name="Hyman L.J."/>
            <person name="Holeva M.C."/>
            <person name="Thomson N.R."/>
            <person name="Bentley S.D."/>
            <person name="Churcher L.J.C."/>
            <person name="Mungall K."/>
            <person name="Atkin R."/>
            <person name="Bason N."/>
            <person name="Brooks K."/>
            <person name="Chillingworth T."/>
            <person name="Clark K."/>
            <person name="Doggett J."/>
            <person name="Fraser A."/>
            <person name="Hance Z."/>
            <person name="Hauser H."/>
            <person name="Jagels K."/>
            <person name="Moule S."/>
            <person name="Norbertczak H."/>
            <person name="Ormond D."/>
            <person name="Price C."/>
            <person name="Quail M.A."/>
            <person name="Sanders M."/>
            <person name="Walker D."/>
            <person name="Whitehead S."/>
            <person name="Salmond G.P.C."/>
            <person name="Birch P.R.J."/>
            <person name="Parkhill J."/>
            <person name="Toth I.K."/>
        </authorList>
    </citation>
    <scope>NUCLEOTIDE SEQUENCE [LARGE SCALE GENOMIC DNA]</scope>
    <source>
        <strain>SCRI 1043 / ATCC BAA-672</strain>
    </source>
</reference>
<name>UPPP_PECAS</name>
<accession>Q6D159</accession>
<organism>
    <name type="scientific">Pectobacterium atrosepticum (strain SCRI 1043 / ATCC BAA-672)</name>
    <name type="common">Erwinia carotovora subsp. atroseptica</name>
    <dbReference type="NCBI Taxonomy" id="218491"/>
    <lineage>
        <taxon>Bacteria</taxon>
        <taxon>Pseudomonadati</taxon>
        <taxon>Pseudomonadota</taxon>
        <taxon>Gammaproteobacteria</taxon>
        <taxon>Enterobacterales</taxon>
        <taxon>Pectobacteriaceae</taxon>
        <taxon>Pectobacterium</taxon>
    </lineage>
</organism>
<feature type="chain" id="PRO_0000151151" description="Undecaprenyl-diphosphatase">
    <location>
        <begin position="1"/>
        <end position="272"/>
    </location>
</feature>
<feature type="transmembrane region" description="Helical" evidence="1">
    <location>
        <begin position="6"/>
        <end position="26"/>
    </location>
</feature>
<feature type="transmembrane region" description="Helical" evidence="1">
    <location>
        <begin position="45"/>
        <end position="65"/>
    </location>
</feature>
<feature type="transmembrane region" description="Helical" evidence="1">
    <location>
        <begin position="92"/>
        <end position="112"/>
    </location>
</feature>
<feature type="transmembrane region" description="Helical" evidence="1">
    <location>
        <begin position="115"/>
        <end position="135"/>
    </location>
</feature>
<feature type="transmembrane region" description="Helical" evidence="1">
    <location>
        <begin position="189"/>
        <end position="209"/>
    </location>
</feature>
<feature type="transmembrane region" description="Helical" evidence="1">
    <location>
        <begin position="221"/>
        <end position="241"/>
    </location>
</feature>
<feature type="transmembrane region" description="Helical" evidence="1">
    <location>
        <begin position="251"/>
        <end position="271"/>
    </location>
</feature>
<evidence type="ECO:0000255" key="1">
    <source>
        <dbReference type="HAMAP-Rule" id="MF_01006"/>
    </source>
</evidence>
<protein>
    <recommendedName>
        <fullName evidence="1">Undecaprenyl-diphosphatase</fullName>
        <ecNumber evidence="1">3.6.1.27</ecNumber>
    </recommendedName>
    <alternativeName>
        <fullName evidence="1">Bacitracin resistance protein</fullName>
    </alternativeName>
    <alternativeName>
        <fullName evidence="1">Undecaprenyl pyrophosphate phosphatase</fullName>
    </alternativeName>
</protein>
<proteinExistence type="inferred from homology"/>